<proteinExistence type="inferred from homology"/>
<sequence>MAVQQNKKSRSKRGMRRSHDALSTAQLSVDATSGEIHMRHNVTADGFYRGKKVINK</sequence>
<evidence type="ECO:0000255" key="1">
    <source>
        <dbReference type="HAMAP-Rule" id="MF_00340"/>
    </source>
</evidence>
<evidence type="ECO:0000256" key="2">
    <source>
        <dbReference type="SAM" id="MobiDB-lite"/>
    </source>
</evidence>
<evidence type="ECO:0000305" key="3"/>
<reference key="1">
    <citation type="submission" date="2007-02" db="EMBL/GenBank/DDBJ databases">
        <title>Complete sequence of chromosome of Shewanella baltica OS155.</title>
        <authorList>
            <consortium name="US DOE Joint Genome Institute"/>
            <person name="Copeland A."/>
            <person name="Lucas S."/>
            <person name="Lapidus A."/>
            <person name="Barry K."/>
            <person name="Detter J.C."/>
            <person name="Glavina del Rio T."/>
            <person name="Hammon N."/>
            <person name="Israni S."/>
            <person name="Dalin E."/>
            <person name="Tice H."/>
            <person name="Pitluck S."/>
            <person name="Sims D.R."/>
            <person name="Brettin T."/>
            <person name="Bruce D."/>
            <person name="Han C."/>
            <person name="Tapia R."/>
            <person name="Brainard J."/>
            <person name="Schmutz J."/>
            <person name="Larimer F."/>
            <person name="Land M."/>
            <person name="Hauser L."/>
            <person name="Kyrpides N."/>
            <person name="Mikhailova N."/>
            <person name="Brettar I."/>
            <person name="Klappenbach J."/>
            <person name="Konstantinidis K."/>
            <person name="Rodrigues J."/>
            <person name="Tiedje J."/>
            <person name="Richardson P."/>
        </authorList>
    </citation>
    <scope>NUCLEOTIDE SEQUENCE [LARGE SCALE GENOMIC DNA]</scope>
    <source>
        <strain>OS155 / ATCC BAA-1091</strain>
    </source>
</reference>
<feature type="chain" id="PRO_1000005077" description="Large ribosomal subunit protein bL32">
    <location>
        <begin position="1"/>
        <end position="56"/>
    </location>
</feature>
<feature type="region of interest" description="Disordered" evidence="2">
    <location>
        <begin position="1"/>
        <end position="26"/>
    </location>
</feature>
<feature type="compositionally biased region" description="Basic residues" evidence="2">
    <location>
        <begin position="7"/>
        <end position="16"/>
    </location>
</feature>
<organism>
    <name type="scientific">Shewanella baltica (strain OS155 / ATCC BAA-1091)</name>
    <dbReference type="NCBI Taxonomy" id="325240"/>
    <lineage>
        <taxon>Bacteria</taxon>
        <taxon>Pseudomonadati</taxon>
        <taxon>Pseudomonadota</taxon>
        <taxon>Gammaproteobacteria</taxon>
        <taxon>Alteromonadales</taxon>
        <taxon>Shewanellaceae</taxon>
        <taxon>Shewanella</taxon>
    </lineage>
</organism>
<protein>
    <recommendedName>
        <fullName evidence="1">Large ribosomal subunit protein bL32</fullName>
    </recommendedName>
    <alternativeName>
        <fullName evidence="3">50S ribosomal protein L32</fullName>
    </alternativeName>
</protein>
<keyword id="KW-1185">Reference proteome</keyword>
<keyword id="KW-0687">Ribonucleoprotein</keyword>
<keyword id="KW-0689">Ribosomal protein</keyword>
<name>RL32_SHEB5</name>
<dbReference type="EMBL" id="CP000563">
    <property type="protein sequence ID" value="ABN61224.1"/>
    <property type="molecule type" value="Genomic_DNA"/>
</dbReference>
<dbReference type="RefSeq" id="WP_006081226.1">
    <property type="nucleotide sequence ID" value="NC_009052.1"/>
</dbReference>
<dbReference type="SMR" id="A3D3B1"/>
<dbReference type="STRING" id="325240.Sbal_1715"/>
<dbReference type="GeneID" id="67443097"/>
<dbReference type="KEGG" id="sbl:Sbal_1715"/>
<dbReference type="HOGENOM" id="CLU_129084_2_1_6"/>
<dbReference type="OrthoDB" id="9801927at2"/>
<dbReference type="Proteomes" id="UP000001557">
    <property type="component" value="Chromosome"/>
</dbReference>
<dbReference type="GO" id="GO:0015934">
    <property type="term" value="C:large ribosomal subunit"/>
    <property type="evidence" value="ECO:0007669"/>
    <property type="project" value="InterPro"/>
</dbReference>
<dbReference type="GO" id="GO:0003735">
    <property type="term" value="F:structural constituent of ribosome"/>
    <property type="evidence" value="ECO:0007669"/>
    <property type="project" value="InterPro"/>
</dbReference>
<dbReference type="GO" id="GO:0006412">
    <property type="term" value="P:translation"/>
    <property type="evidence" value="ECO:0007669"/>
    <property type="project" value="UniProtKB-UniRule"/>
</dbReference>
<dbReference type="HAMAP" id="MF_00340">
    <property type="entry name" value="Ribosomal_bL32"/>
    <property type="match status" value="1"/>
</dbReference>
<dbReference type="InterPro" id="IPR002677">
    <property type="entry name" value="Ribosomal_bL32"/>
</dbReference>
<dbReference type="InterPro" id="IPR044957">
    <property type="entry name" value="Ribosomal_bL32_bact"/>
</dbReference>
<dbReference type="InterPro" id="IPR011332">
    <property type="entry name" value="Ribosomal_zn-bd"/>
</dbReference>
<dbReference type="NCBIfam" id="TIGR01031">
    <property type="entry name" value="rpmF_bact"/>
    <property type="match status" value="1"/>
</dbReference>
<dbReference type="PANTHER" id="PTHR35534">
    <property type="entry name" value="50S RIBOSOMAL PROTEIN L32"/>
    <property type="match status" value="1"/>
</dbReference>
<dbReference type="PANTHER" id="PTHR35534:SF1">
    <property type="entry name" value="LARGE RIBOSOMAL SUBUNIT PROTEIN BL32"/>
    <property type="match status" value="1"/>
</dbReference>
<dbReference type="Pfam" id="PF01783">
    <property type="entry name" value="Ribosomal_L32p"/>
    <property type="match status" value="1"/>
</dbReference>
<dbReference type="SUPFAM" id="SSF57829">
    <property type="entry name" value="Zn-binding ribosomal proteins"/>
    <property type="match status" value="1"/>
</dbReference>
<gene>
    <name evidence="1" type="primary">rpmF</name>
    <name type="ordered locus">Sbal_1715</name>
</gene>
<accession>A3D3B1</accession>
<comment type="similarity">
    <text evidence="1">Belongs to the bacterial ribosomal protein bL32 family.</text>
</comment>